<dbReference type="EMBL" id="CP001100">
    <property type="protein sequence ID" value="ACF14075.1"/>
    <property type="molecule type" value="Genomic_DNA"/>
</dbReference>
<dbReference type="RefSeq" id="WP_012500159.1">
    <property type="nucleotide sequence ID" value="NC_011026.1"/>
</dbReference>
<dbReference type="SMR" id="B3QSM8"/>
<dbReference type="STRING" id="517418.Ctha_1617"/>
<dbReference type="KEGG" id="cts:Ctha_1617"/>
<dbReference type="eggNOG" id="COG0234">
    <property type="taxonomic scope" value="Bacteria"/>
</dbReference>
<dbReference type="HOGENOM" id="CLU_132825_2_0_10"/>
<dbReference type="OrthoDB" id="9806791at2"/>
<dbReference type="Proteomes" id="UP000001208">
    <property type="component" value="Chromosome"/>
</dbReference>
<dbReference type="GO" id="GO:0005737">
    <property type="term" value="C:cytoplasm"/>
    <property type="evidence" value="ECO:0007669"/>
    <property type="project" value="UniProtKB-SubCell"/>
</dbReference>
<dbReference type="GO" id="GO:0005524">
    <property type="term" value="F:ATP binding"/>
    <property type="evidence" value="ECO:0007669"/>
    <property type="project" value="InterPro"/>
</dbReference>
<dbReference type="GO" id="GO:0046872">
    <property type="term" value="F:metal ion binding"/>
    <property type="evidence" value="ECO:0007669"/>
    <property type="project" value="TreeGrafter"/>
</dbReference>
<dbReference type="GO" id="GO:0044183">
    <property type="term" value="F:protein folding chaperone"/>
    <property type="evidence" value="ECO:0007669"/>
    <property type="project" value="InterPro"/>
</dbReference>
<dbReference type="GO" id="GO:0051087">
    <property type="term" value="F:protein-folding chaperone binding"/>
    <property type="evidence" value="ECO:0007669"/>
    <property type="project" value="TreeGrafter"/>
</dbReference>
<dbReference type="GO" id="GO:0051082">
    <property type="term" value="F:unfolded protein binding"/>
    <property type="evidence" value="ECO:0007669"/>
    <property type="project" value="TreeGrafter"/>
</dbReference>
<dbReference type="GO" id="GO:0051085">
    <property type="term" value="P:chaperone cofactor-dependent protein refolding"/>
    <property type="evidence" value="ECO:0007669"/>
    <property type="project" value="TreeGrafter"/>
</dbReference>
<dbReference type="CDD" id="cd00320">
    <property type="entry name" value="cpn10"/>
    <property type="match status" value="1"/>
</dbReference>
<dbReference type="FunFam" id="2.30.33.40:FF:000001">
    <property type="entry name" value="10 kDa chaperonin"/>
    <property type="match status" value="1"/>
</dbReference>
<dbReference type="Gene3D" id="2.30.33.40">
    <property type="entry name" value="GroES chaperonin"/>
    <property type="match status" value="1"/>
</dbReference>
<dbReference type="HAMAP" id="MF_00580">
    <property type="entry name" value="CH10"/>
    <property type="match status" value="1"/>
</dbReference>
<dbReference type="InterPro" id="IPR020818">
    <property type="entry name" value="Chaperonin_GroES"/>
</dbReference>
<dbReference type="InterPro" id="IPR037124">
    <property type="entry name" value="Chaperonin_GroES_sf"/>
</dbReference>
<dbReference type="InterPro" id="IPR018369">
    <property type="entry name" value="Chaprnonin_Cpn10_CS"/>
</dbReference>
<dbReference type="InterPro" id="IPR011032">
    <property type="entry name" value="GroES-like_sf"/>
</dbReference>
<dbReference type="NCBIfam" id="NF001527">
    <property type="entry name" value="PRK00364.1-2"/>
    <property type="match status" value="1"/>
</dbReference>
<dbReference type="NCBIfam" id="NF001529">
    <property type="entry name" value="PRK00364.1-5"/>
    <property type="match status" value="1"/>
</dbReference>
<dbReference type="NCBIfam" id="NF001531">
    <property type="entry name" value="PRK00364.2-2"/>
    <property type="match status" value="1"/>
</dbReference>
<dbReference type="NCBIfam" id="NF001533">
    <property type="entry name" value="PRK00364.2-4"/>
    <property type="match status" value="1"/>
</dbReference>
<dbReference type="NCBIfam" id="NF001534">
    <property type="entry name" value="PRK00364.2-5"/>
    <property type="match status" value="1"/>
</dbReference>
<dbReference type="PANTHER" id="PTHR10772">
    <property type="entry name" value="10 KDA HEAT SHOCK PROTEIN"/>
    <property type="match status" value="1"/>
</dbReference>
<dbReference type="PANTHER" id="PTHR10772:SF58">
    <property type="entry name" value="CO-CHAPERONIN GROES"/>
    <property type="match status" value="1"/>
</dbReference>
<dbReference type="Pfam" id="PF00166">
    <property type="entry name" value="Cpn10"/>
    <property type="match status" value="1"/>
</dbReference>
<dbReference type="PRINTS" id="PR00297">
    <property type="entry name" value="CHAPERONIN10"/>
</dbReference>
<dbReference type="SMART" id="SM00883">
    <property type="entry name" value="Cpn10"/>
    <property type="match status" value="1"/>
</dbReference>
<dbReference type="SUPFAM" id="SSF50129">
    <property type="entry name" value="GroES-like"/>
    <property type="match status" value="1"/>
</dbReference>
<dbReference type="PROSITE" id="PS00681">
    <property type="entry name" value="CHAPERONINS_CPN10"/>
    <property type="match status" value="1"/>
</dbReference>
<accession>B3QSM8</accession>
<comment type="function">
    <text evidence="1">Together with the chaperonin GroEL, plays an essential role in assisting protein folding. The GroEL-GroES system forms a nano-cage that allows encapsulation of the non-native substrate proteins and provides a physical environment optimized to promote and accelerate protein folding. GroES binds to the apical surface of the GroEL ring, thereby capping the opening of the GroEL channel.</text>
</comment>
<comment type="subunit">
    <text evidence="1">Heptamer of 7 subunits arranged in a ring. Interacts with the chaperonin GroEL.</text>
</comment>
<comment type="subcellular location">
    <subcellularLocation>
        <location evidence="1">Cytoplasm</location>
    </subcellularLocation>
</comment>
<comment type="similarity">
    <text evidence="1">Belongs to the GroES chaperonin family.</text>
</comment>
<name>CH10_CHLT3</name>
<keyword id="KW-0143">Chaperone</keyword>
<keyword id="KW-0963">Cytoplasm</keyword>
<keyword id="KW-1185">Reference proteome</keyword>
<gene>
    <name evidence="1" type="primary">groES</name>
    <name evidence="1" type="synonym">groS</name>
    <name type="ordered locus">Ctha_1617</name>
</gene>
<proteinExistence type="inferred from homology"/>
<sequence>MNLKPLADRVIVKPSPAEEKTKGGLYIPDSGKEKPQHGEVVAVGPGKAADNGTVVAMEVQVGQKVLYGKYSGTEVTVDGEDYLIMRESDIFAIIG</sequence>
<protein>
    <recommendedName>
        <fullName evidence="1">Co-chaperonin GroES</fullName>
    </recommendedName>
    <alternativeName>
        <fullName evidence="1">10 kDa chaperonin</fullName>
    </alternativeName>
    <alternativeName>
        <fullName evidence="1">Chaperonin-10</fullName>
        <shortName evidence="1">Cpn10</shortName>
    </alternativeName>
</protein>
<evidence type="ECO:0000255" key="1">
    <source>
        <dbReference type="HAMAP-Rule" id="MF_00580"/>
    </source>
</evidence>
<evidence type="ECO:0000256" key="2">
    <source>
        <dbReference type="SAM" id="MobiDB-lite"/>
    </source>
</evidence>
<reference key="1">
    <citation type="submission" date="2008-06" db="EMBL/GenBank/DDBJ databases">
        <title>Complete sequence of Chloroherpeton thalassium ATCC 35110.</title>
        <authorList>
            <consortium name="US DOE Joint Genome Institute"/>
            <person name="Lucas S."/>
            <person name="Copeland A."/>
            <person name="Lapidus A."/>
            <person name="Glavina del Rio T."/>
            <person name="Dalin E."/>
            <person name="Tice H."/>
            <person name="Bruce D."/>
            <person name="Goodwin L."/>
            <person name="Pitluck S."/>
            <person name="Schmutz J."/>
            <person name="Larimer F."/>
            <person name="Land M."/>
            <person name="Hauser L."/>
            <person name="Kyrpides N."/>
            <person name="Mikhailova N."/>
            <person name="Liu Z."/>
            <person name="Li T."/>
            <person name="Zhao F."/>
            <person name="Overmann J."/>
            <person name="Bryant D.A."/>
            <person name="Richardson P."/>
        </authorList>
    </citation>
    <scope>NUCLEOTIDE SEQUENCE [LARGE SCALE GENOMIC DNA]</scope>
    <source>
        <strain>ATCC 35110 / GB-78</strain>
    </source>
</reference>
<feature type="chain" id="PRO_1000129638" description="Co-chaperonin GroES">
    <location>
        <begin position="1"/>
        <end position="95"/>
    </location>
</feature>
<feature type="region of interest" description="Disordered" evidence="2">
    <location>
        <begin position="12"/>
        <end position="38"/>
    </location>
</feature>
<feature type="compositionally biased region" description="Basic and acidic residues" evidence="2">
    <location>
        <begin position="12"/>
        <end position="22"/>
    </location>
</feature>
<organism>
    <name type="scientific">Chloroherpeton thalassium (strain ATCC 35110 / GB-78)</name>
    <dbReference type="NCBI Taxonomy" id="517418"/>
    <lineage>
        <taxon>Bacteria</taxon>
        <taxon>Pseudomonadati</taxon>
        <taxon>Chlorobiota</taxon>
        <taxon>Chlorobiia</taxon>
        <taxon>Chlorobiales</taxon>
        <taxon>Chloroherpetonaceae</taxon>
        <taxon>Chloroherpeton</taxon>
    </lineage>
</organism>